<dbReference type="EMBL" id="BX571856">
    <property type="protein sequence ID" value="CAG41307.1"/>
    <property type="molecule type" value="Genomic_DNA"/>
</dbReference>
<dbReference type="RefSeq" id="WP_000004086.1">
    <property type="nucleotide sequence ID" value="NC_002952.2"/>
</dbReference>
<dbReference type="SMR" id="Q6GEJ2"/>
<dbReference type="GeneID" id="98346553"/>
<dbReference type="KEGG" id="sar:SAR2326"/>
<dbReference type="HOGENOM" id="CLU_073626_1_0_9"/>
<dbReference type="Proteomes" id="UP000000596">
    <property type="component" value="Chromosome"/>
</dbReference>
<dbReference type="GO" id="GO:0022627">
    <property type="term" value="C:cytosolic small ribosomal subunit"/>
    <property type="evidence" value="ECO:0007669"/>
    <property type="project" value="TreeGrafter"/>
</dbReference>
<dbReference type="GO" id="GO:0019843">
    <property type="term" value="F:rRNA binding"/>
    <property type="evidence" value="ECO:0007669"/>
    <property type="project" value="UniProtKB-UniRule"/>
</dbReference>
<dbReference type="GO" id="GO:0003735">
    <property type="term" value="F:structural constituent of ribosome"/>
    <property type="evidence" value="ECO:0007669"/>
    <property type="project" value="InterPro"/>
</dbReference>
<dbReference type="GO" id="GO:0006412">
    <property type="term" value="P:translation"/>
    <property type="evidence" value="ECO:0007669"/>
    <property type="project" value="UniProtKB-UniRule"/>
</dbReference>
<dbReference type="CDD" id="cd00364">
    <property type="entry name" value="Ribosomal_uS17"/>
    <property type="match status" value="1"/>
</dbReference>
<dbReference type="FunFam" id="2.40.50.140:FF:000026">
    <property type="entry name" value="30S ribosomal protein S17"/>
    <property type="match status" value="1"/>
</dbReference>
<dbReference type="Gene3D" id="2.40.50.140">
    <property type="entry name" value="Nucleic acid-binding proteins"/>
    <property type="match status" value="1"/>
</dbReference>
<dbReference type="HAMAP" id="MF_01345_B">
    <property type="entry name" value="Ribosomal_uS17_B"/>
    <property type="match status" value="1"/>
</dbReference>
<dbReference type="InterPro" id="IPR012340">
    <property type="entry name" value="NA-bd_OB-fold"/>
</dbReference>
<dbReference type="InterPro" id="IPR000266">
    <property type="entry name" value="Ribosomal_uS17"/>
</dbReference>
<dbReference type="InterPro" id="IPR019984">
    <property type="entry name" value="Ribosomal_uS17_bact/chlr"/>
</dbReference>
<dbReference type="InterPro" id="IPR019979">
    <property type="entry name" value="Ribosomal_uS17_CS"/>
</dbReference>
<dbReference type="NCBIfam" id="NF004123">
    <property type="entry name" value="PRK05610.1"/>
    <property type="match status" value="1"/>
</dbReference>
<dbReference type="NCBIfam" id="TIGR03635">
    <property type="entry name" value="uS17_bact"/>
    <property type="match status" value="1"/>
</dbReference>
<dbReference type="PANTHER" id="PTHR10744">
    <property type="entry name" value="40S RIBOSOMAL PROTEIN S11 FAMILY MEMBER"/>
    <property type="match status" value="1"/>
</dbReference>
<dbReference type="PANTHER" id="PTHR10744:SF1">
    <property type="entry name" value="SMALL RIBOSOMAL SUBUNIT PROTEIN US17M"/>
    <property type="match status" value="1"/>
</dbReference>
<dbReference type="Pfam" id="PF00366">
    <property type="entry name" value="Ribosomal_S17"/>
    <property type="match status" value="1"/>
</dbReference>
<dbReference type="PRINTS" id="PR00973">
    <property type="entry name" value="RIBOSOMALS17"/>
</dbReference>
<dbReference type="SUPFAM" id="SSF50249">
    <property type="entry name" value="Nucleic acid-binding proteins"/>
    <property type="match status" value="1"/>
</dbReference>
<dbReference type="PROSITE" id="PS00056">
    <property type="entry name" value="RIBOSOMAL_S17"/>
    <property type="match status" value="1"/>
</dbReference>
<evidence type="ECO:0000255" key="1">
    <source>
        <dbReference type="HAMAP-Rule" id="MF_01345"/>
    </source>
</evidence>
<evidence type="ECO:0000305" key="2"/>
<organism>
    <name type="scientific">Staphylococcus aureus (strain MRSA252)</name>
    <dbReference type="NCBI Taxonomy" id="282458"/>
    <lineage>
        <taxon>Bacteria</taxon>
        <taxon>Bacillati</taxon>
        <taxon>Bacillota</taxon>
        <taxon>Bacilli</taxon>
        <taxon>Bacillales</taxon>
        <taxon>Staphylococcaceae</taxon>
        <taxon>Staphylococcus</taxon>
    </lineage>
</organism>
<keyword id="KW-0687">Ribonucleoprotein</keyword>
<keyword id="KW-0689">Ribosomal protein</keyword>
<keyword id="KW-0694">RNA-binding</keyword>
<keyword id="KW-0699">rRNA-binding</keyword>
<accession>Q6GEJ2</accession>
<feature type="chain" id="PRO_0000128481" description="Small ribosomal subunit protein uS17">
    <location>
        <begin position="1"/>
        <end position="87"/>
    </location>
</feature>
<name>RS17_STAAR</name>
<gene>
    <name evidence="1" type="primary">rpsQ</name>
    <name type="ordered locus">SAR2326</name>
</gene>
<sequence>MSERNDRKVYVGKVVSDKMDKTITVLVETYKTHKLYGKRVKYSKKYKTHDENNSAKLGDIVKIQETRPLSATKRFRLVEIVEESVII</sequence>
<protein>
    <recommendedName>
        <fullName evidence="1">Small ribosomal subunit protein uS17</fullName>
    </recommendedName>
    <alternativeName>
        <fullName evidence="2">30S ribosomal protein S17</fullName>
    </alternativeName>
</protein>
<comment type="function">
    <text evidence="1">One of the primary rRNA binding proteins, it binds specifically to the 5'-end of 16S ribosomal RNA.</text>
</comment>
<comment type="subunit">
    <text evidence="1">Part of the 30S ribosomal subunit.</text>
</comment>
<comment type="similarity">
    <text evidence="1">Belongs to the universal ribosomal protein uS17 family.</text>
</comment>
<reference key="1">
    <citation type="journal article" date="2004" name="Proc. Natl. Acad. Sci. U.S.A.">
        <title>Complete genomes of two clinical Staphylococcus aureus strains: evidence for the rapid evolution of virulence and drug resistance.</title>
        <authorList>
            <person name="Holden M.T.G."/>
            <person name="Feil E.J."/>
            <person name="Lindsay J.A."/>
            <person name="Peacock S.J."/>
            <person name="Day N.P.J."/>
            <person name="Enright M.C."/>
            <person name="Foster T.J."/>
            <person name="Moore C.E."/>
            <person name="Hurst L."/>
            <person name="Atkin R."/>
            <person name="Barron A."/>
            <person name="Bason N."/>
            <person name="Bentley S.D."/>
            <person name="Chillingworth C."/>
            <person name="Chillingworth T."/>
            <person name="Churcher C."/>
            <person name="Clark L."/>
            <person name="Corton C."/>
            <person name="Cronin A."/>
            <person name="Doggett J."/>
            <person name="Dowd L."/>
            <person name="Feltwell T."/>
            <person name="Hance Z."/>
            <person name="Harris B."/>
            <person name="Hauser H."/>
            <person name="Holroyd S."/>
            <person name="Jagels K."/>
            <person name="James K.D."/>
            <person name="Lennard N."/>
            <person name="Line A."/>
            <person name="Mayes R."/>
            <person name="Moule S."/>
            <person name="Mungall K."/>
            <person name="Ormond D."/>
            <person name="Quail M.A."/>
            <person name="Rabbinowitsch E."/>
            <person name="Rutherford K.M."/>
            <person name="Sanders M."/>
            <person name="Sharp S."/>
            <person name="Simmonds M."/>
            <person name="Stevens K."/>
            <person name="Whitehead S."/>
            <person name="Barrell B.G."/>
            <person name="Spratt B.G."/>
            <person name="Parkhill J."/>
        </authorList>
    </citation>
    <scope>NUCLEOTIDE SEQUENCE [LARGE SCALE GENOMIC DNA]</scope>
    <source>
        <strain>MRSA252</strain>
    </source>
</reference>
<proteinExistence type="inferred from homology"/>